<proteinExistence type="inferred from homology"/>
<sequence>MSTAIAQQKIRIRLKAFDRRMLDLSCEKIIETADNTAATAIGPIPLPTKRKIYCVLRSPHVDKDSREHFETRTHRRIIDIYSPSAKTIDALMKLDLPSGVDIEVKL</sequence>
<name>RS10_SYNSC</name>
<evidence type="ECO:0000255" key="1">
    <source>
        <dbReference type="HAMAP-Rule" id="MF_00508"/>
    </source>
</evidence>
<evidence type="ECO:0000305" key="2"/>
<feature type="chain" id="PRO_0000237105" description="Small ribosomal subunit protein uS10">
    <location>
        <begin position="1"/>
        <end position="106"/>
    </location>
</feature>
<dbReference type="EMBL" id="CP000110">
    <property type="protein sequence ID" value="ABB34095.1"/>
    <property type="molecule type" value="Genomic_DNA"/>
</dbReference>
<dbReference type="RefSeq" id="WP_011363346.1">
    <property type="nucleotide sequence ID" value="NC_007516.1"/>
</dbReference>
<dbReference type="SMR" id="Q3AMT7"/>
<dbReference type="STRING" id="110662.Syncc9605_0319"/>
<dbReference type="KEGG" id="syd:Syncc9605_0319"/>
<dbReference type="eggNOG" id="COG0051">
    <property type="taxonomic scope" value="Bacteria"/>
</dbReference>
<dbReference type="HOGENOM" id="CLU_122625_1_3_3"/>
<dbReference type="OrthoDB" id="9804464at2"/>
<dbReference type="GO" id="GO:1990904">
    <property type="term" value="C:ribonucleoprotein complex"/>
    <property type="evidence" value="ECO:0007669"/>
    <property type="project" value="UniProtKB-KW"/>
</dbReference>
<dbReference type="GO" id="GO:0005840">
    <property type="term" value="C:ribosome"/>
    <property type="evidence" value="ECO:0007669"/>
    <property type="project" value="UniProtKB-KW"/>
</dbReference>
<dbReference type="GO" id="GO:0003735">
    <property type="term" value="F:structural constituent of ribosome"/>
    <property type="evidence" value="ECO:0007669"/>
    <property type="project" value="InterPro"/>
</dbReference>
<dbReference type="GO" id="GO:0000049">
    <property type="term" value="F:tRNA binding"/>
    <property type="evidence" value="ECO:0007669"/>
    <property type="project" value="UniProtKB-UniRule"/>
</dbReference>
<dbReference type="GO" id="GO:0006412">
    <property type="term" value="P:translation"/>
    <property type="evidence" value="ECO:0007669"/>
    <property type="project" value="UniProtKB-UniRule"/>
</dbReference>
<dbReference type="FunFam" id="3.30.70.600:FF:000001">
    <property type="entry name" value="30S ribosomal protein S10"/>
    <property type="match status" value="1"/>
</dbReference>
<dbReference type="Gene3D" id="3.30.70.600">
    <property type="entry name" value="Ribosomal protein S10 domain"/>
    <property type="match status" value="1"/>
</dbReference>
<dbReference type="HAMAP" id="MF_00508">
    <property type="entry name" value="Ribosomal_uS10"/>
    <property type="match status" value="1"/>
</dbReference>
<dbReference type="InterPro" id="IPR001848">
    <property type="entry name" value="Ribosomal_uS10"/>
</dbReference>
<dbReference type="InterPro" id="IPR027486">
    <property type="entry name" value="Ribosomal_uS10_dom"/>
</dbReference>
<dbReference type="InterPro" id="IPR036838">
    <property type="entry name" value="Ribosomal_uS10_dom_sf"/>
</dbReference>
<dbReference type="NCBIfam" id="NF001861">
    <property type="entry name" value="PRK00596.1"/>
    <property type="match status" value="1"/>
</dbReference>
<dbReference type="NCBIfam" id="TIGR01049">
    <property type="entry name" value="rpsJ_bact"/>
    <property type="match status" value="1"/>
</dbReference>
<dbReference type="PANTHER" id="PTHR11700">
    <property type="entry name" value="30S RIBOSOMAL PROTEIN S10 FAMILY MEMBER"/>
    <property type="match status" value="1"/>
</dbReference>
<dbReference type="Pfam" id="PF00338">
    <property type="entry name" value="Ribosomal_S10"/>
    <property type="match status" value="1"/>
</dbReference>
<dbReference type="PRINTS" id="PR00971">
    <property type="entry name" value="RIBOSOMALS10"/>
</dbReference>
<dbReference type="SMART" id="SM01403">
    <property type="entry name" value="Ribosomal_S10"/>
    <property type="match status" value="1"/>
</dbReference>
<dbReference type="SUPFAM" id="SSF54999">
    <property type="entry name" value="Ribosomal protein S10"/>
    <property type="match status" value="1"/>
</dbReference>
<organism>
    <name type="scientific">Synechococcus sp. (strain CC9605)</name>
    <dbReference type="NCBI Taxonomy" id="110662"/>
    <lineage>
        <taxon>Bacteria</taxon>
        <taxon>Bacillati</taxon>
        <taxon>Cyanobacteriota</taxon>
        <taxon>Cyanophyceae</taxon>
        <taxon>Synechococcales</taxon>
        <taxon>Synechococcaceae</taxon>
        <taxon>Synechococcus</taxon>
    </lineage>
</organism>
<protein>
    <recommendedName>
        <fullName evidence="1">Small ribosomal subunit protein uS10</fullName>
    </recommendedName>
    <alternativeName>
        <fullName evidence="2">30S ribosomal protein S10</fullName>
    </alternativeName>
</protein>
<keyword id="KW-0687">Ribonucleoprotein</keyword>
<keyword id="KW-0689">Ribosomal protein</keyword>
<reference key="1">
    <citation type="submission" date="2005-07" db="EMBL/GenBank/DDBJ databases">
        <title>Complete sequence of Synechococcus sp. CC9605.</title>
        <authorList>
            <consortium name="US DOE Joint Genome Institute"/>
            <person name="Copeland A."/>
            <person name="Lucas S."/>
            <person name="Lapidus A."/>
            <person name="Barry K."/>
            <person name="Detter J.C."/>
            <person name="Glavina T."/>
            <person name="Hammon N."/>
            <person name="Israni S."/>
            <person name="Pitluck S."/>
            <person name="Schmutz J."/>
            <person name="Martinez M."/>
            <person name="Larimer F."/>
            <person name="Land M."/>
            <person name="Kyrpides N."/>
            <person name="Ivanova N."/>
            <person name="Richardson P."/>
        </authorList>
    </citation>
    <scope>NUCLEOTIDE SEQUENCE [LARGE SCALE GENOMIC DNA]</scope>
    <source>
        <strain>CC9605</strain>
    </source>
</reference>
<gene>
    <name evidence="1" type="primary">rpsJ</name>
    <name evidence="1" type="synonym">rps10</name>
    <name type="ordered locus">Syncc9605_0319</name>
</gene>
<comment type="function">
    <text evidence="1">Involved in the binding of tRNA to the ribosomes.</text>
</comment>
<comment type="subunit">
    <text evidence="1">Part of the 30S ribosomal subunit.</text>
</comment>
<comment type="similarity">
    <text evidence="1">Belongs to the universal ribosomal protein uS10 family.</text>
</comment>
<accession>Q3AMT7</accession>